<gene>
    <name type="ordered locus">Psyr_0457</name>
</gene>
<name>Y457_PSEU2</name>
<sequence length="192" mass="20619">MLKKSLAALALGTALLSAGQAMAADYVIDKEGQHAFVDFKISHLGYSFIHGTFKDWDGTFSFDAAKPEASKINVELKTASLFTNHAERDKHISSKDFLDVAKYPEAKFVSTAVKSTGEKTADVTGDLTLHGVTKPIVIKATFNGEGKDPWGGYRAGFNGTSTLNLNDFGIKGPGPTSQTLDLDISFEGVQKK</sequence>
<dbReference type="EMBL" id="CP000075">
    <property type="protein sequence ID" value="AAY35527.1"/>
    <property type="molecule type" value="Genomic_DNA"/>
</dbReference>
<dbReference type="RefSeq" id="WP_002551707.1">
    <property type="nucleotide sequence ID" value="NC_007005.1"/>
</dbReference>
<dbReference type="RefSeq" id="YP_233565.1">
    <property type="nucleotide sequence ID" value="NC_007005.1"/>
</dbReference>
<dbReference type="SMR" id="Q4ZZ95"/>
<dbReference type="KEGG" id="psb:Psyr_0457"/>
<dbReference type="PATRIC" id="fig|205918.7.peg.475"/>
<dbReference type="eggNOG" id="COG2353">
    <property type="taxonomic scope" value="Bacteria"/>
</dbReference>
<dbReference type="HOGENOM" id="CLU_071003_1_2_6"/>
<dbReference type="OrthoDB" id="9811006at2"/>
<dbReference type="Proteomes" id="UP000000426">
    <property type="component" value="Chromosome"/>
</dbReference>
<dbReference type="GO" id="GO:0042597">
    <property type="term" value="C:periplasmic space"/>
    <property type="evidence" value="ECO:0007669"/>
    <property type="project" value="UniProtKB-SubCell"/>
</dbReference>
<dbReference type="Gene3D" id="2.40.128.110">
    <property type="entry name" value="Lipid/polyisoprenoid-binding, YceI-like"/>
    <property type="match status" value="1"/>
</dbReference>
<dbReference type="HAMAP" id="MF_00780">
    <property type="entry name" value="UPF0312"/>
    <property type="match status" value="1"/>
</dbReference>
<dbReference type="InterPro" id="IPR007372">
    <property type="entry name" value="Lipid/polyisoprenoid-bd_YceI"/>
</dbReference>
<dbReference type="InterPro" id="IPR036761">
    <property type="entry name" value="TTHA0802/YceI-like_sf"/>
</dbReference>
<dbReference type="InterPro" id="IPR023480">
    <property type="entry name" value="UPF0312/YceI"/>
</dbReference>
<dbReference type="NCBIfam" id="NF002994">
    <property type="entry name" value="PRK03757.1"/>
    <property type="match status" value="1"/>
</dbReference>
<dbReference type="PANTHER" id="PTHR34406">
    <property type="entry name" value="PROTEIN YCEI"/>
    <property type="match status" value="1"/>
</dbReference>
<dbReference type="PANTHER" id="PTHR34406:SF1">
    <property type="entry name" value="PROTEIN YCEI"/>
    <property type="match status" value="1"/>
</dbReference>
<dbReference type="Pfam" id="PF04264">
    <property type="entry name" value="YceI"/>
    <property type="match status" value="1"/>
</dbReference>
<dbReference type="SMART" id="SM00867">
    <property type="entry name" value="YceI"/>
    <property type="match status" value="1"/>
</dbReference>
<dbReference type="SUPFAM" id="SSF101874">
    <property type="entry name" value="YceI-like"/>
    <property type="match status" value="1"/>
</dbReference>
<feature type="signal peptide" evidence="1">
    <location>
        <begin position="1"/>
        <end position="23"/>
    </location>
</feature>
<feature type="chain" id="PRO_0000226322" description="UPF0312 protein Psyr_0457">
    <location>
        <begin position="24"/>
        <end position="192"/>
    </location>
</feature>
<proteinExistence type="inferred from homology"/>
<protein>
    <recommendedName>
        <fullName evidence="1">UPF0312 protein Psyr_0457</fullName>
    </recommendedName>
</protein>
<comment type="subcellular location">
    <subcellularLocation>
        <location evidence="1">Periplasm</location>
    </subcellularLocation>
</comment>
<comment type="similarity">
    <text evidence="1">Belongs to the UPF0312 family. Type 1 subfamily.</text>
</comment>
<organism>
    <name type="scientific">Pseudomonas syringae pv. syringae (strain B728a)</name>
    <dbReference type="NCBI Taxonomy" id="205918"/>
    <lineage>
        <taxon>Bacteria</taxon>
        <taxon>Pseudomonadati</taxon>
        <taxon>Pseudomonadota</taxon>
        <taxon>Gammaproteobacteria</taxon>
        <taxon>Pseudomonadales</taxon>
        <taxon>Pseudomonadaceae</taxon>
        <taxon>Pseudomonas</taxon>
        <taxon>Pseudomonas syringae</taxon>
    </lineage>
</organism>
<keyword id="KW-0574">Periplasm</keyword>
<keyword id="KW-0732">Signal</keyword>
<evidence type="ECO:0000255" key="1">
    <source>
        <dbReference type="HAMAP-Rule" id="MF_00780"/>
    </source>
</evidence>
<accession>Q4ZZ95</accession>
<reference key="1">
    <citation type="journal article" date="2005" name="Proc. Natl. Acad. Sci. U.S.A.">
        <title>Comparison of the complete genome sequences of Pseudomonas syringae pv. syringae B728a and pv. tomato DC3000.</title>
        <authorList>
            <person name="Feil H."/>
            <person name="Feil W.S."/>
            <person name="Chain P."/>
            <person name="Larimer F."/>
            <person name="Dibartolo G."/>
            <person name="Copeland A."/>
            <person name="Lykidis A."/>
            <person name="Trong S."/>
            <person name="Nolan M."/>
            <person name="Goltsman E."/>
            <person name="Thiel J."/>
            <person name="Malfatti S."/>
            <person name="Loper J.E."/>
            <person name="Lapidus A."/>
            <person name="Detter J.C."/>
            <person name="Land M."/>
            <person name="Richardson P.M."/>
            <person name="Kyrpides N.C."/>
            <person name="Ivanova N."/>
            <person name="Lindow S.E."/>
        </authorList>
    </citation>
    <scope>NUCLEOTIDE SEQUENCE [LARGE SCALE GENOMIC DNA]</scope>
    <source>
        <strain>B728a</strain>
    </source>
</reference>